<name>RPP14_HUMAN</name>
<feature type="initiator methionine" description="Removed" evidence="1">
    <location>
        <position position="1"/>
    </location>
</feature>
<feature type="chain" id="PRO_0000140010" description="Ribonuclease P protein subunit p14">
    <location>
        <begin position="2"/>
        <end position="124"/>
    </location>
</feature>
<sequence length="124" mass="13693">MPAPAATYERVVYKNPSEYHYMKVCLEFQDCGVGLNAAQFKQLLISAVKDLFGEVDAALPLDILTYEEKTLSAILRICSSGLVKLWSSLTLLGSYKGKKCAFRVIQVSPFLLALSGNSRELVLD</sequence>
<keyword id="KW-0002">3D-structure</keyword>
<keyword id="KW-0903">Direct protein sequencing</keyword>
<keyword id="KW-0539">Nucleus</keyword>
<keyword id="KW-1267">Proteomics identification</keyword>
<keyword id="KW-1185">Reference proteome</keyword>
<keyword id="KW-0694">RNA-binding</keyword>
<keyword id="KW-0819">tRNA processing</keyword>
<comment type="function">
    <text evidence="1 5">Component of ribonuclease P, a ribonucleoprotein complex that generates mature tRNA molecules by cleaving their 5'-ends.</text>
</comment>
<comment type="subunit">
    <text evidence="1 3 5">RNase P consists of a catalytic RNA moiety and about 10 protein subunits; POP1, POP4, POP5, POP7, RPP14, RPP21, RPP25, RPP30, RPP38 and RPP40 (PubMed:10024167, PubMed:16723659, PubMed:30454648). Within the RNase P complex, POP1, POP7 and RPP25 form the 'finger' subcomplex, POP5, RPP14, RPP40 and homodimeric RPP30 form the 'palm' subcomplex, and RPP21, POP4 and RPP38 form the 'wrist' subcomplex. All subunits of the RNase P complex interact with the catalytic RNA (PubMed:30454648).</text>
</comment>
<comment type="interaction">
    <interactant intactId="EBI-366542">
        <id>O95059</id>
    </interactant>
    <interactant intactId="EBI-77797">
        <id>P35609</id>
        <label>ACTN2</label>
    </interactant>
    <organismsDiffer>false</organismsDiffer>
    <experiments>3</experiments>
</comment>
<comment type="interaction">
    <interactant intactId="EBI-366542">
        <id>O95059</id>
    </interactant>
    <interactant intactId="EBI-371922">
        <id>Q96B26</id>
        <label>EXOSC8</label>
    </interactant>
    <organismsDiffer>false</organismsDiffer>
    <experiments>3</experiments>
</comment>
<comment type="interaction">
    <interactant intactId="EBI-366542">
        <id>O95059</id>
    </interactant>
    <interactant intactId="EBI-443648">
        <id>O14893</id>
        <label>GEMIN2</label>
    </interactant>
    <organismsDiffer>false</organismsDiffer>
    <experiments>3</experiments>
</comment>
<comment type="interaction">
    <interactant intactId="EBI-366542">
        <id>O95059</id>
    </interactant>
    <interactant intactId="EBI-366477">
        <id>O95707</id>
        <label>POP4</label>
    </interactant>
    <organismsDiffer>false</organismsDiffer>
    <experiments>4</experiments>
</comment>
<comment type="interaction">
    <interactant intactId="EBI-366542">
        <id>O95059</id>
    </interactant>
    <interactant intactId="EBI-366525">
        <id>Q969H6</id>
        <label>POP5</label>
    </interactant>
    <organismsDiffer>false</organismsDiffer>
    <experiments>3</experiments>
</comment>
<comment type="interaction">
    <interactant intactId="EBI-366542">
        <id>O95059</id>
    </interactant>
    <interactant intactId="EBI-366570">
        <id>Q9BUL9</id>
        <label>RPP25</label>
    </interactant>
    <organismsDiffer>false</organismsDiffer>
    <experiments>4</experiments>
</comment>
<comment type="interaction">
    <interactant intactId="EBI-366542">
        <id>O95059</id>
    </interactant>
    <interactant intactId="EBI-366553">
        <id>P78346</id>
        <label>RPP30</label>
    </interactant>
    <organismsDiffer>false</organismsDiffer>
    <experiments>8</experiments>
</comment>
<comment type="interaction">
    <interactant intactId="EBI-366542">
        <id>O95059</id>
    </interactant>
    <interactant intactId="EBI-366505">
        <id>O75818</id>
        <label>RPP40</label>
    </interactant>
    <organismsDiffer>false</organismsDiffer>
    <experiments>3</experiments>
</comment>
<comment type="interaction">
    <interactant intactId="EBI-366542">
        <id>O95059</id>
    </interactant>
    <interactant intactId="EBI-11995620">
        <id>G5E9M4</id>
        <label>ZNF277</label>
    </interactant>
    <organismsDiffer>false</organismsDiffer>
    <experiments>3</experiments>
</comment>
<comment type="subcellular location">
    <subcellularLocation>
        <location evidence="2 6">Nucleus</location>
        <location evidence="2 6">Nucleolus</location>
    </subcellularLocation>
</comment>
<comment type="miscellaneous">
    <text evidence="4">This protein is produced by a bicistronic gene which also produces the HTD2 protein from an overlapping reading frame.</text>
</comment>
<comment type="similarity">
    <text evidence="6">Belongs to the eukaryotic/archaeal RNase P protein component 2 family.</text>
</comment>
<dbReference type="EMBL" id="AF001175">
    <property type="protein sequence ID" value="AAD00892.1"/>
    <property type="molecule type" value="mRNA"/>
</dbReference>
<dbReference type="EMBL" id="CR407611">
    <property type="protein sequence ID" value="CAG28539.1"/>
    <property type="molecule type" value="mRNA"/>
</dbReference>
<dbReference type="EMBL" id="AK311969">
    <property type="protein sequence ID" value="BAG34908.1"/>
    <property type="molecule type" value="mRNA"/>
</dbReference>
<dbReference type="EMBL" id="BC002441">
    <property type="protein sequence ID" value="AAH02441.1"/>
    <property type="molecule type" value="mRNA"/>
</dbReference>
<dbReference type="EMBL" id="BC007342">
    <property type="protein sequence ID" value="AAH07342.1"/>
    <property type="molecule type" value="mRNA"/>
</dbReference>
<dbReference type="EMBL" id="BC012017">
    <property type="protein sequence ID" value="AAH12017.1"/>
    <property type="molecule type" value="mRNA"/>
</dbReference>
<dbReference type="CCDS" id="CCDS2888.1"/>
<dbReference type="RefSeq" id="NP_001092253.1">
    <property type="nucleotide sequence ID" value="NM_001098783.3"/>
</dbReference>
<dbReference type="RefSeq" id="NP_008973.1">
    <property type="nucleotide sequence ID" value="NM_007042.6"/>
</dbReference>
<dbReference type="RefSeq" id="XP_011531615.1">
    <property type="nucleotide sequence ID" value="XM_011533313.2"/>
</dbReference>
<dbReference type="RefSeq" id="XP_016861130.1">
    <property type="nucleotide sequence ID" value="XM_017005641.1"/>
</dbReference>
<dbReference type="PDB" id="6AHR">
    <property type="method" value="EM"/>
    <property type="resolution" value="3.92 A"/>
    <property type="chains" value="H=1-124"/>
</dbReference>
<dbReference type="PDB" id="6AHU">
    <property type="method" value="EM"/>
    <property type="resolution" value="3.66 A"/>
    <property type="chains" value="H=1-124"/>
</dbReference>
<dbReference type="PDBsum" id="6AHR"/>
<dbReference type="PDBsum" id="6AHU"/>
<dbReference type="EMDB" id="EMD-9626"/>
<dbReference type="EMDB" id="EMD-9627"/>
<dbReference type="SMR" id="O95059"/>
<dbReference type="BioGRID" id="116283">
    <property type="interactions" value="52"/>
</dbReference>
<dbReference type="ComplexPortal" id="CPX-2877">
    <property type="entry name" value="Nucleolar ribonuclease P complex"/>
</dbReference>
<dbReference type="CORUM" id="O95059"/>
<dbReference type="FunCoup" id="O95059">
    <property type="interactions" value="899"/>
</dbReference>
<dbReference type="IntAct" id="O95059">
    <property type="interactions" value="39"/>
</dbReference>
<dbReference type="MINT" id="O95059"/>
<dbReference type="STRING" id="9606.ENSP00000412894"/>
<dbReference type="GlyGen" id="O95059">
    <property type="glycosylation" value="1 site, 1 O-linked glycan (1 site)"/>
</dbReference>
<dbReference type="iPTMnet" id="O95059"/>
<dbReference type="PhosphoSitePlus" id="O95059"/>
<dbReference type="BioMuta" id="RPP14"/>
<dbReference type="jPOST" id="O95059"/>
<dbReference type="MassIVE" id="O95059"/>
<dbReference type="PaxDb" id="9606-ENSP00000412894"/>
<dbReference type="PeptideAtlas" id="O95059"/>
<dbReference type="ProteomicsDB" id="50635"/>
<dbReference type="Pumba" id="O95059"/>
<dbReference type="TopDownProteomics" id="O95059"/>
<dbReference type="Antibodypedia" id="31632">
    <property type="antibodies" value="78 antibodies from 12 providers"/>
</dbReference>
<dbReference type="DNASU" id="11102"/>
<dbReference type="Ensembl" id="ENST00000295959.10">
    <property type="protein sequence ID" value="ENSP00000295959.5"/>
    <property type="gene ID" value="ENSG00000163684.12"/>
</dbReference>
<dbReference type="Ensembl" id="ENST00000445193.7">
    <property type="protein sequence ID" value="ENSP00000412894.2"/>
    <property type="gene ID" value="ENSG00000163684.12"/>
</dbReference>
<dbReference type="Ensembl" id="ENST00000466547.1">
    <property type="protein sequence ID" value="ENSP00000419909.1"/>
    <property type="gene ID" value="ENSG00000163684.12"/>
</dbReference>
<dbReference type="GeneID" id="11102"/>
<dbReference type="KEGG" id="hsa:11102"/>
<dbReference type="MANE-Select" id="ENST00000295959.10">
    <property type="protein sequence ID" value="ENSP00000295959.5"/>
    <property type="RefSeq nucleotide sequence ID" value="NM_007042.6"/>
    <property type="RefSeq protein sequence ID" value="NP_008973.1"/>
</dbReference>
<dbReference type="UCSC" id="uc003dju.6">
    <property type="organism name" value="human"/>
</dbReference>
<dbReference type="AGR" id="HGNC:30327"/>
<dbReference type="CTD" id="11102"/>
<dbReference type="DisGeNET" id="11102"/>
<dbReference type="GeneCards" id="RPP14"/>
<dbReference type="HGNC" id="HGNC:30327">
    <property type="gene designation" value="RPP14"/>
</dbReference>
<dbReference type="HPA" id="ENSG00000163684">
    <property type="expression patterns" value="Tissue enhanced (skeletal muscle, tongue)"/>
</dbReference>
<dbReference type="MIM" id="606112">
    <property type="type" value="gene"/>
</dbReference>
<dbReference type="neXtProt" id="NX_O95059"/>
<dbReference type="OpenTargets" id="ENSG00000163684"/>
<dbReference type="PharmGKB" id="PA134896894"/>
<dbReference type="VEuPathDB" id="HostDB:ENSG00000163684"/>
<dbReference type="eggNOG" id="ENOG502S10S">
    <property type="taxonomic scope" value="Eukaryota"/>
</dbReference>
<dbReference type="GeneTree" id="ENSGT00510000048121"/>
<dbReference type="HOGENOM" id="CLU_157358_0_0_1"/>
<dbReference type="InParanoid" id="O95059"/>
<dbReference type="OMA" id="PCHFQVI"/>
<dbReference type="OrthoDB" id="2262258at2759"/>
<dbReference type="PAN-GO" id="O95059">
    <property type="GO annotations" value="1 GO annotation based on evolutionary models"/>
</dbReference>
<dbReference type="PhylomeDB" id="O95059"/>
<dbReference type="TreeFam" id="TF324711"/>
<dbReference type="BRENDA" id="3.1.26.5">
    <property type="organism ID" value="2681"/>
</dbReference>
<dbReference type="PathwayCommons" id="O95059"/>
<dbReference type="Reactome" id="R-HSA-6784531">
    <property type="pathway name" value="tRNA processing in the nucleus"/>
</dbReference>
<dbReference type="Reactome" id="R-HSA-6791226">
    <property type="pathway name" value="Major pathway of rRNA processing in the nucleolus and cytosol"/>
</dbReference>
<dbReference type="SignaLink" id="O95059"/>
<dbReference type="BioGRID-ORCS" id="11102">
    <property type="hits" value="739 hits in 1151 CRISPR screens"/>
</dbReference>
<dbReference type="CD-CODE" id="91857CE7">
    <property type="entry name" value="Nucleolus"/>
</dbReference>
<dbReference type="ChiTaRS" id="RPP14">
    <property type="organism name" value="human"/>
</dbReference>
<dbReference type="GeneWiki" id="RPP14"/>
<dbReference type="GenomeRNAi" id="11102"/>
<dbReference type="Pharos" id="O95059">
    <property type="development level" value="Tbio"/>
</dbReference>
<dbReference type="PRO" id="PR:O95059"/>
<dbReference type="Proteomes" id="UP000005640">
    <property type="component" value="Chromosome 3"/>
</dbReference>
<dbReference type="RNAct" id="O95059">
    <property type="molecule type" value="protein"/>
</dbReference>
<dbReference type="Bgee" id="ENSG00000163684">
    <property type="expression patterns" value="Expressed in hindlimb stylopod muscle and 100 other cell types or tissues"/>
</dbReference>
<dbReference type="GO" id="GO:0030681">
    <property type="term" value="C:multimeric ribonuclease P complex"/>
    <property type="evidence" value="ECO:0000314"/>
    <property type="project" value="UniProtKB"/>
</dbReference>
<dbReference type="GO" id="GO:0005730">
    <property type="term" value="C:nucleolus"/>
    <property type="evidence" value="ECO:0000314"/>
    <property type="project" value="UniProtKB"/>
</dbReference>
<dbReference type="GO" id="GO:0005654">
    <property type="term" value="C:nucleoplasm"/>
    <property type="evidence" value="ECO:0000304"/>
    <property type="project" value="Reactome"/>
</dbReference>
<dbReference type="GO" id="GO:0004526">
    <property type="term" value="F:ribonuclease P activity"/>
    <property type="evidence" value="ECO:0007669"/>
    <property type="project" value="UniProtKB-EC"/>
</dbReference>
<dbReference type="GO" id="GO:0033204">
    <property type="term" value="F:ribonuclease P RNA binding"/>
    <property type="evidence" value="ECO:0000314"/>
    <property type="project" value="UniProtKB"/>
</dbReference>
<dbReference type="GO" id="GO:0001682">
    <property type="term" value="P:tRNA 5'-leader removal"/>
    <property type="evidence" value="ECO:0000314"/>
    <property type="project" value="UniProtKB"/>
</dbReference>
<dbReference type="FunFam" id="3.30.70.3250:FF:000002">
    <property type="entry name" value="ribonuclease P protein subunit p14"/>
    <property type="match status" value="1"/>
</dbReference>
<dbReference type="Gene3D" id="3.30.70.3250">
    <property type="entry name" value="Ribonuclease P, Pop5 subunit"/>
    <property type="match status" value="1"/>
</dbReference>
<dbReference type="InterPro" id="IPR002759">
    <property type="entry name" value="Pop5/Rpp14/Rnp2-like"/>
</dbReference>
<dbReference type="InterPro" id="IPR038085">
    <property type="entry name" value="Rnp2-like_sf"/>
</dbReference>
<dbReference type="PANTHER" id="PTHR15441">
    <property type="entry name" value="RIBONUCLEASE P PROTEIN SUBUNIT P14"/>
    <property type="match status" value="1"/>
</dbReference>
<dbReference type="PANTHER" id="PTHR15441:SF1">
    <property type="entry name" value="RIBONUCLEASE P PROTEIN SUBUNIT P14"/>
    <property type="match status" value="1"/>
</dbReference>
<dbReference type="Pfam" id="PF01900">
    <property type="entry name" value="RNase_P_Rpp14"/>
    <property type="match status" value="1"/>
</dbReference>
<dbReference type="SUPFAM" id="SSF160350">
    <property type="entry name" value="Rnp2-like"/>
    <property type="match status" value="1"/>
</dbReference>
<proteinExistence type="evidence at protein level"/>
<accession>O95059</accession>
<accession>Q53X97</accession>
<gene>
    <name type="primary">RPP14</name>
</gene>
<protein>
    <recommendedName>
        <fullName>Ribonuclease P protein subunit p14</fullName>
    </recommendedName>
</protein>
<organism>
    <name type="scientific">Homo sapiens</name>
    <name type="common">Human</name>
    <dbReference type="NCBI Taxonomy" id="9606"/>
    <lineage>
        <taxon>Eukaryota</taxon>
        <taxon>Metazoa</taxon>
        <taxon>Chordata</taxon>
        <taxon>Craniata</taxon>
        <taxon>Vertebrata</taxon>
        <taxon>Euteleostomi</taxon>
        <taxon>Mammalia</taxon>
        <taxon>Eutheria</taxon>
        <taxon>Euarchontoglires</taxon>
        <taxon>Primates</taxon>
        <taxon>Haplorrhini</taxon>
        <taxon>Catarrhini</taxon>
        <taxon>Hominidae</taxon>
        <taxon>Homo</taxon>
    </lineage>
</organism>
<reference key="1">
    <citation type="journal article" date="1999" name="RNA">
        <title>Rpp14 and Rpp29, two protein subunits of human ribonuclease P.</title>
        <authorList>
            <person name="Jarrous N."/>
            <person name="Eder P.S."/>
            <person name="Wesolowski D."/>
            <person name="Altman S."/>
        </authorList>
    </citation>
    <scope>NUCLEOTIDE SEQUENCE [MRNA]</scope>
    <scope>PROTEIN SEQUENCE OF 2-14</scope>
    <scope>FUNCTION</scope>
    <scope>SUBUNIT</scope>
    <source>
        <tissue>Liver</tissue>
        <tissue>Spleen</tissue>
    </source>
</reference>
<reference key="2">
    <citation type="submission" date="2004-05" db="EMBL/GenBank/DDBJ databases">
        <title>Cloning of human full open reading frames in Gateway(TM) system entry vector (pDONR201).</title>
        <authorList>
            <person name="Ebert L."/>
            <person name="Schick M."/>
            <person name="Neubert P."/>
            <person name="Schatten R."/>
            <person name="Henze S."/>
            <person name="Korn B."/>
        </authorList>
    </citation>
    <scope>NUCLEOTIDE SEQUENCE [LARGE SCALE MRNA]</scope>
</reference>
<reference key="3">
    <citation type="journal article" date="2004" name="Nat. Genet.">
        <title>Complete sequencing and characterization of 21,243 full-length human cDNAs.</title>
        <authorList>
            <person name="Ota T."/>
            <person name="Suzuki Y."/>
            <person name="Nishikawa T."/>
            <person name="Otsuki T."/>
            <person name="Sugiyama T."/>
            <person name="Irie R."/>
            <person name="Wakamatsu A."/>
            <person name="Hayashi K."/>
            <person name="Sato H."/>
            <person name="Nagai K."/>
            <person name="Kimura K."/>
            <person name="Makita H."/>
            <person name="Sekine M."/>
            <person name="Obayashi M."/>
            <person name="Nishi T."/>
            <person name="Shibahara T."/>
            <person name="Tanaka T."/>
            <person name="Ishii S."/>
            <person name="Yamamoto J."/>
            <person name="Saito K."/>
            <person name="Kawai Y."/>
            <person name="Isono Y."/>
            <person name="Nakamura Y."/>
            <person name="Nagahari K."/>
            <person name="Murakami K."/>
            <person name="Yasuda T."/>
            <person name="Iwayanagi T."/>
            <person name="Wagatsuma M."/>
            <person name="Shiratori A."/>
            <person name="Sudo H."/>
            <person name="Hosoiri T."/>
            <person name="Kaku Y."/>
            <person name="Kodaira H."/>
            <person name="Kondo H."/>
            <person name="Sugawara M."/>
            <person name="Takahashi M."/>
            <person name="Kanda K."/>
            <person name="Yokoi T."/>
            <person name="Furuya T."/>
            <person name="Kikkawa E."/>
            <person name="Omura Y."/>
            <person name="Abe K."/>
            <person name="Kamihara K."/>
            <person name="Katsuta N."/>
            <person name="Sato K."/>
            <person name="Tanikawa M."/>
            <person name="Yamazaki M."/>
            <person name="Ninomiya K."/>
            <person name="Ishibashi T."/>
            <person name="Yamashita H."/>
            <person name="Murakawa K."/>
            <person name="Fujimori K."/>
            <person name="Tanai H."/>
            <person name="Kimata M."/>
            <person name="Watanabe M."/>
            <person name="Hiraoka S."/>
            <person name="Chiba Y."/>
            <person name="Ishida S."/>
            <person name="Ono Y."/>
            <person name="Takiguchi S."/>
            <person name="Watanabe S."/>
            <person name="Yosida M."/>
            <person name="Hotuta T."/>
            <person name="Kusano J."/>
            <person name="Kanehori K."/>
            <person name="Takahashi-Fujii A."/>
            <person name="Hara H."/>
            <person name="Tanase T.-O."/>
            <person name="Nomura Y."/>
            <person name="Togiya S."/>
            <person name="Komai F."/>
            <person name="Hara R."/>
            <person name="Takeuchi K."/>
            <person name="Arita M."/>
            <person name="Imose N."/>
            <person name="Musashino K."/>
            <person name="Yuuki H."/>
            <person name="Oshima A."/>
            <person name="Sasaki N."/>
            <person name="Aotsuka S."/>
            <person name="Yoshikawa Y."/>
            <person name="Matsunawa H."/>
            <person name="Ichihara T."/>
            <person name="Shiohata N."/>
            <person name="Sano S."/>
            <person name="Moriya S."/>
            <person name="Momiyama H."/>
            <person name="Satoh N."/>
            <person name="Takami S."/>
            <person name="Terashima Y."/>
            <person name="Suzuki O."/>
            <person name="Nakagawa S."/>
            <person name="Senoh A."/>
            <person name="Mizoguchi H."/>
            <person name="Goto Y."/>
            <person name="Shimizu F."/>
            <person name="Wakebe H."/>
            <person name="Hishigaki H."/>
            <person name="Watanabe T."/>
            <person name="Sugiyama A."/>
            <person name="Takemoto M."/>
            <person name="Kawakami B."/>
            <person name="Yamazaki M."/>
            <person name="Watanabe K."/>
            <person name="Kumagai A."/>
            <person name="Itakura S."/>
            <person name="Fukuzumi Y."/>
            <person name="Fujimori Y."/>
            <person name="Komiyama M."/>
            <person name="Tashiro H."/>
            <person name="Tanigami A."/>
            <person name="Fujiwara T."/>
            <person name="Ono T."/>
            <person name="Yamada K."/>
            <person name="Fujii Y."/>
            <person name="Ozaki K."/>
            <person name="Hirao M."/>
            <person name="Ohmori Y."/>
            <person name="Kawabata A."/>
            <person name="Hikiji T."/>
            <person name="Kobatake N."/>
            <person name="Inagaki H."/>
            <person name="Ikema Y."/>
            <person name="Okamoto S."/>
            <person name="Okitani R."/>
            <person name="Kawakami T."/>
            <person name="Noguchi S."/>
            <person name="Itoh T."/>
            <person name="Shigeta K."/>
            <person name="Senba T."/>
            <person name="Matsumura K."/>
            <person name="Nakajima Y."/>
            <person name="Mizuno T."/>
            <person name="Morinaga M."/>
            <person name="Sasaki M."/>
            <person name="Togashi T."/>
            <person name="Oyama M."/>
            <person name="Hata H."/>
            <person name="Watanabe M."/>
            <person name="Komatsu T."/>
            <person name="Mizushima-Sugano J."/>
            <person name="Satoh T."/>
            <person name="Shirai Y."/>
            <person name="Takahashi Y."/>
            <person name="Nakagawa K."/>
            <person name="Okumura K."/>
            <person name="Nagase T."/>
            <person name="Nomura N."/>
            <person name="Kikuchi H."/>
            <person name="Masuho Y."/>
            <person name="Yamashita R."/>
            <person name="Nakai K."/>
            <person name="Yada T."/>
            <person name="Nakamura Y."/>
            <person name="Ohara O."/>
            <person name="Isogai T."/>
            <person name="Sugano S."/>
        </authorList>
    </citation>
    <scope>NUCLEOTIDE SEQUENCE [LARGE SCALE MRNA]</scope>
    <source>
        <tissue>Kidney</tissue>
    </source>
</reference>
<reference key="4">
    <citation type="journal article" date="2004" name="Genome Res.">
        <title>The status, quality, and expansion of the NIH full-length cDNA project: the Mammalian Gene Collection (MGC).</title>
        <authorList>
            <consortium name="The MGC Project Team"/>
        </authorList>
    </citation>
    <scope>NUCLEOTIDE SEQUENCE [LARGE SCALE MRNA]</scope>
    <source>
        <tissue>Mammary gland</tissue>
        <tissue>Skin</tissue>
    </source>
</reference>
<reference key="5">
    <citation type="journal article" date="1999" name="J. Cell Biol.">
        <title>Localization in the nucleolus and coiled bodies of protein subunits of the ribonucleoprotein ribonuclease P.</title>
        <authorList>
            <person name="Jarrous N."/>
            <person name="Wolenski J.S."/>
            <person name="Wesolowski D."/>
            <person name="Lee C."/>
            <person name="Altman S."/>
        </authorList>
    </citation>
    <scope>SUBCELLULAR LOCATION</scope>
</reference>
<reference key="6">
    <citation type="journal article" date="2006" name="RNA">
        <title>Differential association of protein subunits with the human RNase MRP and RNase P complexes.</title>
        <authorList>
            <person name="Welting T.J."/>
            <person name="Kikkert B.J."/>
            <person name="van Venrooij W.J."/>
            <person name="Pruijn G.J."/>
        </authorList>
    </citation>
    <scope>IDENTIFICATION IN RNASE P COMPLEX</scope>
    <scope>SUBUNIT</scope>
</reference>
<reference key="7">
    <citation type="journal article" date="2008" name="FASEB J.">
        <title>An ancient genetic link between vertebrate mitochondrial fatty acid synthesis and RNA processing.</title>
        <authorList>
            <person name="Autio K.J."/>
            <person name="Kastaniotis A.J."/>
            <person name="Pospiech H."/>
            <person name="Miinalainen I.J."/>
            <person name="Schonauer M.S."/>
            <person name="Dieckmann C.L."/>
            <person name="Hiltunen J.K."/>
        </authorList>
    </citation>
    <scope>IDENTIFICATION OF BICISTRONIC GENE</scope>
</reference>
<reference key="8">
    <citation type="journal article" date="2011" name="BMC Syst. Biol.">
        <title>Initial characterization of the human central proteome.</title>
        <authorList>
            <person name="Burkard T.R."/>
            <person name="Planyavsky M."/>
            <person name="Kaupe I."/>
            <person name="Breitwieser F.P."/>
            <person name="Buerckstuemmer T."/>
            <person name="Bennett K.L."/>
            <person name="Superti-Furga G."/>
            <person name="Colinge J."/>
        </authorList>
    </citation>
    <scope>IDENTIFICATION BY MASS SPECTROMETRY [LARGE SCALE ANALYSIS]</scope>
</reference>
<reference key="9">
    <citation type="journal article" date="2012" name="Proc. Natl. Acad. Sci. U.S.A.">
        <title>N-terminal acetylome analyses and functional insights of the N-terminal acetyltransferase NatB.</title>
        <authorList>
            <person name="Van Damme P."/>
            <person name="Lasa M."/>
            <person name="Polevoda B."/>
            <person name="Gazquez C."/>
            <person name="Elosegui-Artola A."/>
            <person name="Kim D.S."/>
            <person name="De Juan-Pardo E."/>
            <person name="Demeyer K."/>
            <person name="Hole K."/>
            <person name="Larrea E."/>
            <person name="Timmerman E."/>
            <person name="Prieto J."/>
            <person name="Arnesen T."/>
            <person name="Sherman F."/>
            <person name="Gevaert K."/>
            <person name="Aldabe R."/>
        </authorList>
    </citation>
    <scope>IDENTIFICATION BY MASS SPECTROMETRY [LARGE SCALE ANALYSIS]</scope>
</reference>
<reference evidence="7 8" key="10">
    <citation type="journal article" date="2018" name="Cell">
        <title>Cryo-EM Structure of the Human Ribonuclease P Holoenzyme.</title>
        <authorList>
            <person name="Wu J."/>
            <person name="Niu S."/>
            <person name="Tan M."/>
            <person name="Huang C."/>
            <person name="Li M."/>
            <person name="Song Y."/>
            <person name="Wang Q."/>
            <person name="Chen J."/>
            <person name="Shi S."/>
            <person name="Lan P."/>
            <person name="Lei M."/>
        </authorList>
    </citation>
    <scope>STRUCTURE BY ELECTRON MICROSCOPY (3.66 ANGSTROMS) OF RNASE P HOLOENZYME IN COMPLEX WITH TRNA</scope>
    <scope>FUNCTION</scope>
    <scope>SUBUNIT</scope>
</reference>
<evidence type="ECO:0000269" key="1">
    <source>
    </source>
</evidence>
<evidence type="ECO:0000269" key="2">
    <source>
    </source>
</evidence>
<evidence type="ECO:0000269" key="3">
    <source>
    </source>
</evidence>
<evidence type="ECO:0000269" key="4">
    <source>
    </source>
</evidence>
<evidence type="ECO:0000269" key="5">
    <source>
    </source>
</evidence>
<evidence type="ECO:0000305" key="6"/>
<evidence type="ECO:0007744" key="7">
    <source>
        <dbReference type="PDB" id="6AHR"/>
    </source>
</evidence>
<evidence type="ECO:0007744" key="8">
    <source>
        <dbReference type="PDB" id="6AHU"/>
    </source>
</evidence>